<organism>
    <name type="scientific">Mus musculus</name>
    <name type="common">Mouse</name>
    <dbReference type="NCBI Taxonomy" id="10090"/>
    <lineage>
        <taxon>Eukaryota</taxon>
        <taxon>Metazoa</taxon>
        <taxon>Chordata</taxon>
        <taxon>Craniata</taxon>
        <taxon>Vertebrata</taxon>
        <taxon>Euteleostomi</taxon>
        <taxon>Mammalia</taxon>
        <taxon>Eutheria</taxon>
        <taxon>Euarchontoglires</taxon>
        <taxon>Glires</taxon>
        <taxon>Rodentia</taxon>
        <taxon>Myomorpha</taxon>
        <taxon>Muroidea</taxon>
        <taxon>Muridae</taxon>
        <taxon>Murinae</taxon>
        <taxon>Mus</taxon>
        <taxon>Mus</taxon>
    </lineage>
</organism>
<dbReference type="EMBL" id="Y12724">
    <property type="protein sequence ID" value="CAA73256.1"/>
    <property type="status" value="ALT_INIT"/>
    <property type="molecule type" value="mRNA"/>
</dbReference>
<dbReference type="EMBL" id="AB062896">
    <property type="protein sequence ID" value="BAB79214.1"/>
    <property type="molecule type" value="Genomic_DNA"/>
</dbReference>
<dbReference type="CCDS" id="CCDS39559.1"/>
<dbReference type="RefSeq" id="NP_035814.2">
    <property type="nucleotide sequence ID" value="NM_011684.2"/>
</dbReference>
<dbReference type="SMR" id="Q8VIC7"/>
<dbReference type="STRING" id="10090.ENSMUSP00000052123"/>
<dbReference type="GlyCosmos" id="Q8VIC7">
    <property type="glycosylation" value="1 site, No reported glycans"/>
</dbReference>
<dbReference type="GlyGen" id="Q8VIC7">
    <property type="glycosylation" value="1 site"/>
</dbReference>
<dbReference type="PaxDb" id="10090-ENSMUSP00000052123"/>
<dbReference type="DNASU" id="22297"/>
<dbReference type="Ensembl" id="ENSMUST00000054202.5">
    <property type="protein sequence ID" value="ENSMUSP00000052123.4"/>
    <property type="gene ID" value="ENSMUSG00000044248.5"/>
</dbReference>
<dbReference type="Ensembl" id="ENSMUST00000227426.2">
    <property type="protein sequence ID" value="ENSMUSP00000153735.2"/>
    <property type="gene ID" value="ENSMUSG00000044248.5"/>
</dbReference>
<dbReference type="Ensembl" id="ENSMUST00000227977.2">
    <property type="protein sequence ID" value="ENSMUSP00000154708.2"/>
    <property type="gene ID" value="ENSMUSG00000044248.5"/>
</dbReference>
<dbReference type="Ensembl" id="ENSMUST00000228662.2">
    <property type="protein sequence ID" value="ENSMUSP00000154795.2"/>
    <property type="gene ID" value="ENSMUSG00000044248.5"/>
</dbReference>
<dbReference type="GeneID" id="22297"/>
<dbReference type="KEGG" id="mmu:22297"/>
<dbReference type="UCSC" id="uc009cwp.1">
    <property type="organism name" value="mouse"/>
</dbReference>
<dbReference type="AGR" id="MGI:1333762"/>
<dbReference type="CTD" id="22297"/>
<dbReference type="MGI" id="MGI:1333762">
    <property type="gene designation" value="Vmn1r45"/>
</dbReference>
<dbReference type="VEuPathDB" id="HostDB:ENSMUSG00000044248"/>
<dbReference type="eggNOG" id="ENOG502SNRJ">
    <property type="taxonomic scope" value="Eukaryota"/>
</dbReference>
<dbReference type="GeneTree" id="ENSGT01030000234553"/>
<dbReference type="HOGENOM" id="CLU_058641_0_0_1"/>
<dbReference type="InParanoid" id="Q8VIC7"/>
<dbReference type="OMA" id="FWNDITC"/>
<dbReference type="OrthoDB" id="9620038at2759"/>
<dbReference type="PhylomeDB" id="Q8VIC7"/>
<dbReference type="BioGRID-ORCS" id="22297">
    <property type="hits" value="0 hits in 52 CRISPR screens"/>
</dbReference>
<dbReference type="PRO" id="PR:Q8VIC7"/>
<dbReference type="Proteomes" id="UP000000589">
    <property type="component" value="Chromosome 6"/>
</dbReference>
<dbReference type="RNAct" id="Q8VIC7">
    <property type="molecule type" value="protein"/>
</dbReference>
<dbReference type="Bgee" id="ENSMUSG00000044248">
    <property type="expression patterns" value="Expressed in epiblast cell in embryo and 12 other cell types or tissues"/>
</dbReference>
<dbReference type="ExpressionAtlas" id="Q8VIC7">
    <property type="expression patterns" value="differential"/>
</dbReference>
<dbReference type="GO" id="GO:0005886">
    <property type="term" value="C:plasma membrane"/>
    <property type="evidence" value="ECO:0007669"/>
    <property type="project" value="UniProtKB-SubCell"/>
</dbReference>
<dbReference type="GO" id="GO:0016503">
    <property type="term" value="F:pheromone receptor activity"/>
    <property type="evidence" value="ECO:0007669"/>
    <property type="project" value="InterPro"/>
</dbReference>
<dbReference type="GO" id="GO:0019236">
    <property type="term" value="P:response to pheromone"/>
    <property type="evidence" value="ECO:0007669"/>
    <property type="project" value="UniProtKB-KW"/>
</dbReference>
<dbReference type="GO" id="GO:0007606">
    <property type="term" value="P:sensory perception of chemical stimulus"/>
    <property type="evidence" value="ECO:0007669"/>
    <property type="project" value="UniProtKB-ARBA"/>
</dbReference>
<dbReference type="CDD" id="cd13949">
    <property type="entry name" value="7tm_V1R_pheromone"/>
    <property type="match status" value="1"/>
</dbReference>
<dbReference type="FunFam" id="1.20.1070.10:FF:000051">
    <property type="entry name" value="Vomeronasal type-1 receptor"/>
    <property type="match status" value="1"/>
</dbReference>
<dbReference type="Gene3D" id="1.20.1070.10">
    <property type="entry name" value="Rhodopsin 7-helix transmembrane proteins"/>
    <property type="match status" value="1"/>
</dbReference>
<dbReference type="InterPro" id="IPR017452">
    <property type="entry name" value="GPCR_Rhodpsn_7TM"/>
</dbReference>
<dbReference type="InterPro" id="IPR004072">
    <property type="entry name" value="Vmron_rcpt_1"/>
</dbReference>
<dbReference type="PANTHER" id="PTHR24062">
    <property type="entry name" value="VOMERONASAL TYPE-1 RECEPTOR"/>
    <property type="match status" value="1"/>
</dbReference>
<dbReference type="Pfam" id="PF03402">
    <property type="entry name" value="V1R"/>
    <property type="match status" value="1"/>
</dbReference>
<dbReference type="PRINTS" id="PR01534">
    <property type="entry name" value="VOMERONASL1R"/>
</dbReference>
<dbReference type="SUPFAM" id="SSF81321">
    <property type="entry name" value="Family A G protein-coupled receptor-like"/>
    <property type="match status" value="1"/>
</dbReference>
<dbReference type="PROSITE" id="PS50262">
    <property type="entry name" value="G_PROTEIN_RECEP_F1_2"/>
    <property type="match status" value="1"/>
</dbReference>
<protein>
    <recommendedName>
        <fullName>Vomeronasal type-1 receptor 45</fullName>
    </recommendedName>
    <alternativeName>
        <fullName>Pheromone receptor 2</fullName>
    </alternativeName>
    <alternativeName>
        <fullName>Vomeronasal type-1 receptor A2</fullName>
        <shortName>mV1R2</shortName>
    </alternativeName>
    <alternativeName>
        <fullName>Vomeronasal type-1 receptor A9</fullName>
    </alternativeName>
</protein>
<accession>Q8VIC7</accession>
<accession>Q9Z196</accession>
<name>V1R45_MOUSE</name>
<feature type="chain" id="PRO_0000239957" description="Vomeronasal type-1 receptor 45">
    <location>
        <begin position="1"/>
        <end position="318"/>
    </location>
</feature>
<feature type="topological domain" description="Extracellular" evidence="1">
    <location>
        <begin position="1"/>
        <end position="32"/>
    </location>
</feature>
<feature type="transmembrane region" description="Helical; Name=1" evidence="1">
    <location>
        <begin position="33"/>
        <end position="53"/>
    </location>
</feature>
<feature type="topological domain" description="Cytoplasmic" evidence="1">
    <location>
        <begin position="54"/>
        <end position="65"/>
    </location>
</feature>
<feature type="transmembrane region" description="Helical; Name=2" evidence="1">
    <location>
        <begin position="66"/>
        <end position="86"/>
    </location>
</feature>
<feature type="topological domain" description="Extracellular" evidence="1">
    <location>
        <begin position="87"/>
        <end position="109"/>
    </location>
</feature>
<feature type="transmembrane region" description="Helical; Name=3" evidence="1">
    <location>
        <begin position="110"/>
        <end position="130"/>
    </location>
</feature>
<feature type="topological domain" description="Cytoplasmic" evidence="1">
    <location>
        <begin position="131"/>
        <end position="150"/>
    </location>
</feature>
<feature type="transmembrane region" description="Helical; Name=4" evidence="1">
    <location>
        <begin position="151"/>
        <end position="171"/>
    </location>
</feature>
<feature type="topological domain" description="Extracellular" evidence="1">
    <location>
        <begin position="172"/>
        <end position="206"/>
    </location>
</feature>
<feature type="transmembrane region" description="Helical; Name=5" evidence="1">
    <location>
        <begin position="207"/>
        <end position="227"/>
    </location>
</feature>
<feature type="topological domain" description="Cytoplasmic" evidence="1">
    <location>
        <begin position="228"/>
        <end position="254"/>
    </location>
</feature>
<feature type="transmembrane region" description="Helical; Name=6" evidence="1">
    <location>
        <begin position="255"/>
        <end position="275"/>
    </location>
</feature>
<feature type="topological domain" description="Extracellular" evidence="1">
    <location>
        <begin position="276"/>
        <end position="285"/>
    </location>
</feature>
<feature type="transmembrane region" description="Helical; Name=7" evidence="1">
    <location>
        <begin position="286"/>
        <end position="306"/>
    </location>
</feature>
<feature type="topological domain" description="Cytoplasmic" evidence="1">
    <location>
        <begin position="307"/>
        <end position="318"/>
    </location>
</feature>
<feature type="glycosylation site" description="N-linked (GlcNAc...) asparagine" evidence="1">
    <location>
        <position position="175"/>
    </location>
</feature>
<feature type="disulfide bond" evidence="2">
    <location>
        <begin position="101"/>
        <end position="188"/>
    </location>
</feature>
<feature type="sequence conflict" description="In Ref. 1; CAA73256." evidence="5" ref="1">
    <original>L</original>
    <variation>W</variation>
    <location>
        <position position="111"/>
    </location>
</feature>
<proteinExistence type="evidence at transcript level"/>
<sequence length="318" mass="36348">MSEILFFSPQPLFSHMMNKNSRLHTHSNIKNTFFSEIGIGILGNSFLLLFHILKFIRGHRLRLTDLPIGLLSLIHLLMLLLMAFIATDIFISRRGWDDIICKFLVYLYRVLRGLSLCTTSMLSVLQAIILSPRSSCLAKLKHKYPHHISCAIIFLSVLYMLISSHILLSIIATPNLTRNDFLYVTQSCSILPLSYVMQSMYSTLLALREVFLISLMVLSTLYMVVLLCRHRKQAQHLQGTSLSPKASAEQRATQTILMLMTFFVLMSIFDSIVSCSRTMFLDDPTSYSIHIFVMHIYATVSPFVFMSTEKHIVNILRG</sequence>
<evidence type="ECO:0000255" key="1"/>
<evidence type="ECO:0000255" key="2">
    <source>
        <dbReference type="PROSITE-ProRule" id="PRU00521"/>
    </source>
</evidence>
<evidence type="ECO:0000269" key="3">
    <source>
    </source>
</evidence>
<evidence type="ECO:0000269" key="4">
    <source>
    </source>
</evidence>
<evidence type="ECO:0000305" key="5"/>
<evidence type="ECO:0000312" key="6">
    <source>
        <dbReference type="EMBL" id="BAB79214.1"/>
    </source>
</evidence>
<evidence type="ECO:0000312" key="7">
    <source>
        <dbReference type="EMBL" id="CAA73256.1"/>
    </source>
</evidence>
<keyword id="KW-1003">Cell membrane</keyword>
<keyword id="KW-1015">Disulfide bond</keyword>
<keyword id="KW-0297">G-protein coupled receptor</keyword>
<keyword id="KW-0325">Glycoprotein</keyword>
<keyword id="KW-0472">Membrane</keyword>
<keyword id="KW-0589">Pheromone response</keyword>
<keyword id="KW-0675">Receptor</keyword>
<keyword id="KW-1185">Reference proteome</keyword>
<keyword id="KW-0807">Transducer</keyword>
<keyword id="KW-0812">Transmembrane</keyword>
<keyword id="KW-1133">Transmembrane helix</keyword>
<comment type="function">
    <text evidence="3">Putative pheromone receptor implicated in the regulation of social and reproductive behavior.</text>
</comment>
<comment type="subcellular location">
    <subcellularLocation>
        <location evidence="5">Cell membrane</location>
        <topology evidence="1">Multi-pass membrane protein</topology>
    </subcellularLocation>
</comment>
<comment type="tissue specificity">
    <text evidence="4">Expressed in a subset of sensory neurons located in the apical layer of the vomeronasal organ.</text>
</comment>
<comment type="disruption phenotype">
    <text evidence="3">Mice lacking all but one V1ra and V1rb gene (12% of the V1r repertoire) show a lack of chemosensory response to a subset of known pheromonal ligands and changes in maternal aggression as well as male reproductive behavior.</text>
</comment>
<comment type="similarity">
    <text evidence="2">Belongs to the G-protein coupled receptor 1 family.</text>
</comment>
<comment type="sequence caution" evidence="5">
    <conflict type="erroneous initiation">
        <sequence resource="EMBL-CDS" id="CAA73256"/>
    </conflict>
</comment>
<gene>
    <name type="primary">Vmn1r45</name>
    <name evidence="7" type="synonym">Pr2</name>
    <name type="synonym">V1ra2</name>
    <name evidence="6" type="synonym">V1ra9</name>
</gene>
<reference evidence="5 7" key="1">
    <citation type="journal article" date="1998" name="Brain Res. Mol. Brain Res.">
        <title>Isolation of mouse vomeronasal receptor genes and their co-localization with specific G-protein messenger RNAs.</title>
        <authorList>
            <person name="Saito H."/>
            <person name="Mimmack M.L."/>
            <person name="Keverne E.B."/>
            <person name="Kishimoto J."/>
            <person name="Emson P.C."/>
        </authorList>
    </citation>
    <scope>NUCLEOTIDE SEQUENCE [MRNA]</scope>
    <scope>TISSUE SPECIFICITY</scope>
    <source>
        <strain evidence="7">BALB/cJ</strain>
        <tissue evidence="7">Vomeronasal organ</tissue>
    </source>
</reference>
<reference evidence="6" key="2">
    <citation type="submission" date="2001-06" db="EMBL/GenBank/DDBJ databases">
        <authorList>
            <person name="Sam M."/>
            <person name="Matsunami H."/>
            <person name="Buck L."/>
        </authorList>
    </citation>
    <scope>NUCLEOTIDE SEQUENCE [GENOMIC DNA]</scope>
</reference>
<reference evidence="5" key="3">
    <citation type="journal article" date="2002" name="Nature">
        <title>Deficient pheromone responses in mice lacking a cluster of vomeronasal receptor genes.</title>
        <authorList>
            <person name="Del Punta K."/>
            <person name="Leinders-Zufall T."/>
            <person name="Rodriguez I."/>
            <person name="Jukam D."/>
            <person name="Wysocki C.J."/>
            <person name="Ogawa S."/>
            <person name="Zufall F."/>
            <person name="Mombaerts P."/>
        </authorList>
    </citation>
    <scope>PUTATIVE FUNCTION</scope>
    <scope>DISRUPTION PHENOTYPE</scope>
</reference>